<organism>
    <name type="scientific">Neisseria gonorrhoeae (strain NCCP11945)</name>
    <dbReference type="NCBI Taxonomy" id="521006"/>
    <lineage>
        <taxon>Bacteria</taxon>
        <taxon>Pseudomonadati</taxon>
        <taxon>Pseudomonadota</taxon>
        <taxon>Betaproteobacteria</taxon>
        <taxon>Neisseriales</taxon>
        <taxon>Neisseriaceae</taxon>
        <taxon>Neisseria</taxon>
    </lineage>
</organism>
<protein>
    <recommendedName>
        <fullName evidence="1">3-isopropylmalate dehydratase large subunit</fullName>
        <ecNumber evidence="1">4.2.1.33</ecNumber>
    </recommendedName>
    <alternativeName>
        <fullName evidence="1">Alpha-IPM isomerase</fullName>
        <shortName evidence="1">IPMI</shortName>
    </alternativeName>
    <alternativeName>
        <fullName evidence="1">Isopropylmalate isomerase</fullName>
    </alternativeName>
</protein>
<comment type="function">
    <text evidence="1">Catalyzes the isomerization between 2-isopropylmalate and 3-isopropylmalate, via the formation of 2-isopropylmaleate.</text>
</comment>
<comment type="catalytic activity">
    <reaction evidence="1">
        <text>(2R,3S)-3-isopropylmalate = (2S)-2-isopropylmalate</text>
        <dbReference type="Rhea" id="RHEA:32287"/>
        <dbReference type="ChEBI" id="CHEBI:1178"/>
        <dbReference type="ChEBI" id="CHEBI:35121"/>
        <dbReference type="EC" id="4.2.1.33"/>
    </reaction>
</comment>
<comment type="cofactor">
    <cofactor evidence="1">
        <name>[4Fe-4S] cluster</name>
        <dbReference type="ChEBI" id="CHEBI:49883"/>
    </cofactor>
    <text evidence="1">Binds 1 [4Fe-4S] cluster per subunit.</text>
</comment>
<comment type="pathway">
    <text evidence="1">Amino-acid biosynthesis; L-leucine biosynthesis; L-leucine from 3-methyl-2-oxobutanoate: step 2/4.</text>
</comment>
<comment type="subunit">
    <text evidence="1">Heterodimer of LeuC and LeuD.</text>
</comment>
<comment type="similarity">
    <text evidence="1">Belongs to the aconitase/IPM isomerase family. LeuC type 1 subfamily.</text>
</comment>
<sequence length="469" mass="50502">MTAQTLYDKLWNSHVVREEGDGTVLLYIDRHLVHEVTSPQAFEGLKMAGRKLWRIDSVVSTADHNTPTGDWDKGIQDPISKLQVDTLDQNIKEFGALAYFPFMDKGQGIVHVMGPEQGATLPGMTVVCGDSHTSTHGAFGALAHGIGTSEVEHTMATQCITAKKSKSMLIAVDGKLKAGVTAKDVALYIIGQIGTAGGTGYAVEFGGEAIRSLSMEGRMTLCNMAIEAGARSGMVAVDQTTIDYVKGKPFAPEGEAWDKAVEYWRTLVSDEGAVFDKEYRFNAEDIEPQVTWGTSPEMVLNIGGKVPNPAEETDPVKRSGIERALEYMGLKAGTPLNEIPVDIVFIGSCTNSRIEDLREAAAIAKGHKKAGNVQRVLIVPGSGLVKEQAEKEGLDKIFIEAGFEWREPGCSMCLAMNADRLAPRQRCASTSNRNFEGRQGNGGRTHLVSPAMAAAAAVTGHFTDIRTMA</sequence>
<gene>
    <name evidence="1" type="primary">leuC</name>
    <name type="ordered locus">NGK_1227</name>
</gene>
<evidence type="ECO:0000255" key="1">
    <source>
        <dbReference type="HAMAP-Rule" id="MF_01026"/>
    </source>
</evidence>
<dbReference type="EC" id="4.2.1.33" evidence="1"/>
<dbReference type="EMBL" id="CP001050">
    <property type="protein sequence ID" value="ACF29904.1"/>
    <property type="molecule type" value="Genomic_DNA"/>
</dbReference>
<dbReference type="RefSeq" id="WP_003701383.1">
    <property type="nucleotide sequence ID" value="NC_011035.1"/>
</dbReference>
<dbReference type="SMR" id="B4RM67"/>
<dbReference type="GeneID" id="66753017"/>
<dbReference type="KEGG" id="ngk:NGK_1227"/>
<dbReference type="HOGENOM" id="CLU_006714_3_4_4"/>
<dbReference type="UniPathway" id="UPA00048">
    <property type="reaction ID" value="UER00071"/>
</dbReference>
<dbReference type="Proteomes" id="UP000002564">
    <property type="component" value="Chromosome"/>
</dbReference>
<dbReference type="GO" id="GO:0003861">
    <property type="term" value="F:3-isopropylmalate dehydratase activity"/>
    <property type="evidence" value="ECO:0007669"/>
    <property type="project" value="UniProtKB-UniRule"/>
</dbReference>
<dbReference type="GO" id="GO:0051539">
    <property type="term" value="F:4 iron, 4 sulfur cluster binding"/>
    <property type="evidence" value="ECO:0007669"/>
    <property type="project" value="UniProtKB-KW"/>
</dbReference>
<dbReference type="GO" id="GO:0046872">
    <property type="term" value="F:metal ion binding"/>
    <property type="evidence" value="ECO:0007669"/>
    <property type="project" value="UniProtKB-KW"/>
</dbReference>
<dbReference type="GO" id="GO:0009098">
    <property type="term" value="P:L-leucine biosynthetic process"/>
    <property type="evidence" value="ECO:0007669"/>
    <property type="project" value="UniProtKB-UniRule"/>
</dbReference>
<dbReference type="CDD" id="cd01583">
    <property type="entry name" value="IPMI"/>
    <property type="match status" value="1"/>
</dbReference>
<dbReference type="FunFam" id="3.30.499.10:FF:000007">
    <property type="entry name" value="3-isopropylmalate dehydratase large subunit"/>
    <property type="match status" value="1"/>
</dbReference>
<dbReference type="Gene3D" id="3.30.499.10">
    <property type="entry name" value="Aconitase, domain 3"/>
    <property type="match status" value="2"/>
</dbReference>
<dbReference type="HAMAP" id="MF_01026">
    <property type="entry name" value="LeuC_type1"/>
    <property type="match status" value="1"/>
</dbReference>
<dbReference type="InterPro" id="IPR004430">
    <property type="entry name" value="3-IsopropMal_deHydase_lsu"/>
</dbReference>
<dbReference type="InterPro" id="IPR015931">
    <property type="entry name" value="Acnase/IPM_dHydase_lsu_aba_1/3"/>
</dbReference>
<dbReference type="InterPro" id="IPR001030">
    <property type="entry name" value="Acoase/IPM_deHydtase_lsu_aba"/>
</dbReference>
<dbReference type="InterPro" id="IPR018136">
    <property type="entry name" value="Aconitase_4Fe-4S_BS"/>
</dbReference>
<dbReference type="InterPro" id="IPR036008">
    <property type="entry name" value="Aconitase_4Fe-4S_dom"/>
</dbReference>
<dbReference type="InterPro" id="IPR050067">
    <property type="entry name" value="IPM_dehydratase_rel_enz"/>
</dbReference>
<dbReference type="InterPro" id="IPR033941">
    <property type="entry name" value="IPMI_cat"/>
</dbReference>
<dbReference type="NCBIfam" id="TIGR00170">
    <property type="entry name" value="leuC"/>
    <property type="match status" value="1"/>
</dbReference>
<dbReference type="NCBIfam" id="NF004016">
    <property type="entry name" value="PRK05478.1"/>
    <property type="match status" value="1"/>
</dbReference>
<dbReference type="NCBIfam" id="NF009116">
    <property type="entry name" value="PRK12466.1"/>
    <property type="match status" value="1"/>
</dbReference>
<dbReference type="PANTHER" id="PTHR43822:SF9">
    <property type="entry name" value="3-ISOPROPYLMALATE DEHYDRATASE"/>
    <property type="match status" value="1"/>
</dbReference>
<dbReference type="PANTHER" id="PTHR43822">
    <property type="entry name" value="HOMOACONITASE, MITOCHONDRIAL-RELATED"/>
    <property type="match status" value="1"/>
</dbReference>
<dbReference type="Pfam" id="PF00330">
    <property type="entry name" value="Aconitase"/>
    <property type="match status" value="1"/>
</dbReference>
<dbReference type="PRINTS" id="PR00415">
    <property type="entry name" value="ACONITASE"/>
</dbReference>
<dbReference type="SUPFAM" id="SSF53732">
    <property type="entry name" value="Aconitase iron-sulfur domain"/>
    <property type="match status" value="1"/>
</dbReference>
<dbReference type="PROSITE" id="PS00450">
    <property type="entry name" value="ACONITASE_1"/>
    <property type="match status" value="1"/>
</dbReference>
<dbReference type="PROSITE" id="PS01244">
    <property type="entry name" value="ACONITASE_2"/>
    <property type="match status" value="1"/>
</dbReference>
<feature type="chain" id="PRO_1000135697" description="3-isopropylmalate dehydratase large subunit">
    <location>
        <begin position="1"/>
        <end position="469"/>
    </location>
</feature>
<feature type="binding site" evidence="1">
    <location>
        <position position="349"/>
    </location>
    <ligand>
        <name>[4Fe-4S] cluster</name>
        <dbReference type="ChEBI" id="CHEBI:49883"/>
    </ligand>
</feature>
<feature type="binding site" evidence="1">
    <location>
        <position position="410"/>
    </location>
    <ligand>
        <name>[4Fe-4S] cluster</name>
        <dbReference type="ChEBI" id="CHEBI:49883"/>
    </ligand>
</feature>
<feature type="binding site" evidence="1">
    <location>
        <position position="413"/>
    </location>
    <ligand>
        <name>[4Fe-4S] cluster</name>
        <dbReference type="ChEBI" id="CHEBI:49883"/>
    </ligand>
</feature>
<reference key="1">
    <citation type="journal article" date="2008" name="J. Bacteriol.">
        <title>Complete genome sequence of Neisseria gonorrhoeae NCCP11945.</title>
        <authorList>
            <person name="Chung G.T."/>
            <person name="Yoo J.S."/>
            <person name="Oh H.B."/>
            <person name="Lee Y.S."/>
            <person name="Cha S.H."/>
            <person name="Kim S.J."/>
            <person name="Yoo C.K."/>
        </authorList>
    </citation>
    <scope>NUCLEOTIDE SEQUENCE [LARGE SCALE GENOMIC DNA]</scope>
    <source>
        <strain>NCCP11945</strain>
    </source>
</reference>
<name>LEUC_NEIG2</name>
<accession>B4RM67</accession>
<proteinExistence type="inferred from homology"/>
<keyword id="KW-0004">4Fe-4S</keyword>
<keyword id="KW-0028">Amino-acid biosynthesis</keyword>
<keyword id="KW-0100">Branched-chain amino acid biosynthesis</keyword>
<keyword id="KW-0408">Iron</keyword>
<keyword id="KW-0411">Iron-sulfur</keyword>
<keyword id="KW-0432">Leucine biosynthesis</keyword>
<keyword id="KW-0456">Lyase</keyword>
<keyword id="KW-0479">Metal-binding</keyword>